<proteinExistence type="inferred from homology"/>
<gene>
    <name evidence="1" type="primary">rnhB</name>
    <name type="ordered locus">Abu_1627</name>
</gene>
<organism>
    <name type="scientific">Aliarcobacter butzleri (strain RM4018)</name>
    <name type="common">Arcobacter butzleri</name>
    <dbReference type="NCBI Taxonomy" id="367737"/>
    <lineage>
        <taxon>Bacteria</taxon>
        <taxon>Pseudomonadati</taxon>
        <taxon>Campylobacterota</taxon>
        <taxon>Epsilonproteobacteria</taxon>
        <taxon>Campylobacterales</taxon>
        <taxon>Arcobacteraceae</taxon>
        <taxon>Aliarcobacter</taxon>
    </lineage>
</organism>
<reference key="1">
    <citation type="journal article" date="2007" name="PLoS ONE">
        <title>The complete genome sequence and analysis of the Epsilonproteobacterium Arcobacter butzleri.</title>
        <authorList>
            <person name="Miller W.G."/>
            <person name="Parker C.T."/>
            <person name="Rubenfield M."/>
            <person name="Mendz G.L."/>
            <person name="Woesten M.M.S.M."/>
            <person name="Ussery D.W."/>
            <person name="Stolz J.F."/>
            <person name="Binnewies T.T."/>
            <person name="Hallin P.F."/>
            <person name="Wang G."/>
            <person name="Malek J.A."/>
            <person name="Rogosin A."/>
            <person name="Stanker L.H."/>
            <person name="Mandrell R.E."/>
        </authorList>
    </citation>
    <scope>NUCLEOTIDE SEQUENCE [LARGE SCALE GENOMIC DNA]</scope>
    <source>
        <strain>RM4018</strain>
    </source>
</reference>
<keyword id="KW-0963">Cytoplasm</keyword>
<keyword id="KW-0255">Endonuclease</keyword>
<keyword id="KW-0378">Hydrolase</keyword>
<keyword id="KW-0464">Manganese</keyword>
<keyword id="KW-0479">Metal-binding</keyword>
<keyword id="KW-0540">Nuclease</keyword>
<keyword id="KW-1185">Reference proteome</keyword>
<comment type="function">
    <text evidence="1">Endonuclease that specifically degrades the RNA of RNA-DNA hybrids.</text>
</comment>
<comment type="catalytic activity">
    <reaction evidence="1">
        <text>Endonucleolytic cleavage to 5'-phosphomonoester.</text>
        <dbReference type="EC" id="3.1.26.4"/>
    </reaction>
</comment>
<comment type="cofactor">
    <cofactor evidence="1">
        <name>Mn(2+)</name>
        <dbReference type="ChEBI" id="CHEBI:29035"/>
    </cofactor>
    <cofactor evidence="1">
        <name>Mg(2+)</name>
        <dbReference type="ChEBI" id="CHEBI:18420"/>
    </cofactor>
    <text evidence="1">Manganese or magnesium. Binds 1 divalent metal ion per monomer in the absence of substrate. May bind a second metal ion after substrate binding.</text>
</comment>
<comment type="subcellular location">
    <subcellularLocation>
        <location evidence="1">Cytoplasm</location>
    </subcellularLocation>
</comment>
<comment type="similarity">
    <text evidence="1">Belongs to the RNase HII family.</text>
</comment>
<feature type="chain" id="PRO_0000334861" description="Ribonuclease HII">
    <location>
        <begin position="1"/>
        <end position="192"/>
    </location>
</feature>
<feature type="domain" description="RNase H type-2" evidence="2">
    <location>
        <begin position="2"/>
        <end position="187"/>
    </location>
</feature>
<feature type="binding site" evidence="1">
    <location>
        <position position="8"/>
    </location>
    <ligand>
        <name>a divalent metal cation</name>
        <dbReference type="ChEBI" id="CHEBI:60240"/>
    </ligand>
</feature>
<feature type="binding site" evidence="1">
    <location>
        <position position="9"/>
    </location>
    <ligand>
        <name>a divalent metal cation</name>
        <dbReference type="ChEBI" id="CHEBI:60240"/>
    </ligand>
</feature>
<feature type="binding site" evidence="1">
    <location>
        <position position="97"/>
    </location>
    <ligand>
        <name>a divalent metal cation</name>
        <dbReference type="ChEBI" id="CHEBI:60240"/>
    </ligand>
</feature>
<accession>A8EVA1</accession>
<protein>
    <recommendedName>
        <fullName evidence="1">Ribonuclease HII</fullName>
        <shortName evidence="1">RNase HII</shortName>
        <ecNumber evidence="1">3.1.26.4</ecNumber>
    </recommendedName>
</protein>
<dbReference type="EC" id="3.1.26.4" evidence="1"/>
<dbReference type="EMBL" id="CP000361">
    <property type="protein sequence ID" value="ABV67874.1"/>
    <property type="molecule type" value="Genomic_DNA"/>
</dbReference>
<dbReference type="RefSeq" id="WP_012147607.1">
    <property type="nucleotide sequence ID" value="NC_009850.1"/>
</dbReference>
<dbReference type="SMR" id="A8EVA1"/>
<dbReference type="STRING" id="367737.Abu_1627"/>
<dbReference type="GeneID" id="24303741"/>
<dbReference type="KEGG" id="abu:Abu_1627"/>
<dbReference type="eggNOG" id="COG0164">
    <property type="taxonomic scope" value="Bacteria"/>
</dbReference>
<dbReference type="HOGENOM" id="CLU_036532_3_1_7"/>
<dbReference type="Proteomes" id="UP000001136">
    <property type="component" value="Chromosome"/>
</dbReference>
<dbReference type="GO" id="GO:0005737">
    <property type="term" value="C:cytoplasm"/>
    <property type="evidence" value="ECO:0007669"/>
    <property type="project" value="UniProtKB-SubCell"/>
</dbReference>
<dbReference type="GO" id="GO:0032299">
    <property type="term" value="C:ribonuclease H2 complex"/>
    <property type="evidence" value="ECO:0007669"/>
    <property type="project" value="TreeGrafter"/>
</dbReference>
<dbReference type="GO" id="GO:0030145">
    <property type="term" value="F:manganese ion binding"/>
    <property type="evidence" value="ECO:0007669"/>
    <property type="project" value="UniProtKB-UniRule"/>
</dbReference>
<dbReference type="GO" id="GO:0003723">
    <property type="term" value="F:RNA binding"/>
    <property type="evidence" value="ECO:0007669"/>
    <property type="project" value="InterPro"/>
</dbReference>
<dbReference type="GO" id="GO:0004523">
    <property type="term" value="F:RNA-DNA hybrid ribonuclease activity"/>
    <property type="evidence" value="ECO:0007669"/>
    <property type="project" value="UniProtKB-UniRule"/>
</dbReference>
<dbReference type="GO" id="GO:0043137">
    <property type="term" value="P:DNA replication, removal of RNA primer"/>
    <property type="evidence" value="ECO:0007669"/>
    <property type="project" value="TreeGrafter"/>
</dbReference>
<dbReference type="GO" id="GO:0006298">
    <property type="term" value="P:mismatch repair"/>
    <property type="evidence" value="ECO:0007669"/>
    <property type="project" value="TreeGrafter"/>
</dbReference>
<dbReference type="CDD" id="cd07182">
    <property type="entry name" value="RNase_HII_bacteria_HII_like"/>
    <property type="match status" value="1"/>
</dbReference>
<dbReference type="Gene3D" id="3.30.420.10">
    <property type="entry name" value="Ribonuclease H-like superfamily/Ribonuclease H"/>
    <property type="match status" value="1"/>
</dbReference>
<dbReference type="HAMAP" id="MF_00052_B">
    <property type="entry name" value="RNase_HII_B"/>
    <property type="match status" value="1"/>
</dbReference>
<dbReference type="InterPro" id="IPR022898">
    <property type="entry name" value="RNase_HII"/>
</dbReference>
<dbReference type="InterPro" id="IPR001352">
    <property type="entry name" value="RNase_HII/HIII"/>
</dbReference>
<dbReference type="InterPro" id="IPR024567">
    <property type="entry name" value="RNase_HII/HIII_dom"/>
</dbReference>
<dbReference type="InterPro" id="IPR012337">
    <property type="entry name" value="RNaseH-like_sf"/>
</dbReference>
<dbReference type="InterPro" id="IPR036397">
    <property type="entry name" value="RNaseH_sf"/>
</dbReference>
<dbReference type="NCBIfam" id="NF000595">
    <property type="entry name" value="PRK00015.1-3"/>
    <property type="match status" value="1"/>
</dbReference>
<dbReference type="PANTHER" id="PTHR10954">
    <property type="entry name" value="RIBONUCLEASE H2 SUBUNIT A"/>
    <property type="match status" value="1"/>
</dbReference>
<dbReference type="PANTHER" id="PTHR10954:SF18">
    <property type="entry name" value="RIBONUCLEASE HII"/>
    <property type="match status" value="1"/>
</dbReference>
<dbReference type="Pfam" id="PF01351">
    <property type="entry name" value="RNase_HII"/>
    <property type="match status" value="1"/>
</dbReference>
<dbReference type="SUPFAM" id="SSF53098">
    <property type="entry name" value="Ribonuclease H-like"/>
    <property type="match status" value="1"/>
</dbReference>
<dbReference type="PROSITE" id="PS51975">
    <property type="entry name" value="RNASE_H_2"/>
    <property type="match status" value="1"/>
</dbReference>
<name>RNH2_ALIB4</name>
<sequence>MKNLCGIDEAGRGPLAGPLVVAGVILLEDIVGLNDSKVLSEKKREKLFDEIKEKSKYHIVFSDAKLIDEKGISFCLKSSILEIIENLKEFSNSFLMDGNTNFGIQILQKEIKADAKYAQVSAASILAKVSRDRFMDEISPLYPKYDFHKHKGYGTKAHIEAIKEFGRSDIHRHTFKLKALGENEIGVQKSLF</sequence>
<evidence type="ECO:0000255" key="1">
    <source>
        <dbReference type="HAMAP-Rule" id="MF_00052"/>
    </source>
</evidence>
<evidence type="ECO:0000255" key="2">
    <source>
        <dbReference type="PROSITE-ProRule" id="PRU01319"/>
    </source>
</evidence>